<dbReference type="EMBL" id="CP000308">
    <property type="protein sequence ID" value="ABG15204.1"/>
    <property type="molecule type" value="Genomic_DNA"/>
</dbReference>
<dbReference type="RefSeq" id="WP_002213346.1">
    <property type="nucleotide sequence ID" value="NZ_CP009906.1"/>
</dbReference>
<dbReference type="SMR" id="Q1C2W8"/>
<dbReference type="GeneID" id="96663174"/>
<dbReference type="KEGG" id="ypa:YPA_3242"/>
<dbReference type="Proteomes" id="UP000001971">
    <property type="component" value="Chromosome"/>
</dbReference>
<dbReference type="GO" id="GO:0005829">
    <property type="term" value="C:cytosol"/>
    <property type="evidence" value="ECO:0007669"/>
    <property type="project" value="TreeGrafter"/>
</dbReference>
<dbReference type="GO" id="GO:0015935">
    <property type="term" value="C:small ribosomal subunit"/>
    <property type="evidence" value="ECO:0007669"/>
    <property type="project" value="TreeGrafter"/>
</dbReference>
<dbReference type="GO" id="GO:0019843">
    <property type="term" value="F:rRNA binding"/>
    <property type="evidence" value="ECO:0007669"/>
    <property type="project" value="UniProtKB-UniRule"/>
</dbReference>
<dbReference type="GO" id="GO:0003735">
    <property type="term" value="F:structural constituent of ribosome"/>
    <property type="evidence" value="ECO:0007669"/>
    <property type="project" value="InterPro"/>
</dbReference>
<dbReference type="GO" id="GO:0000049">
    <property type="term" value="F:tRNA binding"/>
    <property type="evidence" value="ECO:0007669"/>
    <property type="project" value="UniProtKB-UniRule"/>
</dbReference>
<dbReference type="GO" id="GO:0006412">
    <property type="term" value="P:translation"/>
    <property type="evidence" value="ECO:0007669"/>
    <property type="project" value="UniProtKB-UniRule"/>
</dbReference>
<dbReference type="FunFam" id="1.10.8.50:FF:000001">
    <property type="entry name" value="30S ribosomal protein S13"/>
    <property type="match status" value="1"/>
</dbReference>
<dbReference type="FunFam" id="4.10.910.10:FF:000001">
    <property type="entry name" value="30S ribosomal protein S13"/>
    <property type="match status" value="1"/>
</dbReference>
<dbReference type="Gene3D" id="1.10.8.50">
    <property type="match status" value="1"/>
</dbReference>
<dbReference type="Gene3D" id="4.10.910.10">
    <property type="entry name" value="30s ribosomal protein s13, domain 2"/>
    <property type="match status" value="1"/>
</dbReference>
<dbReference type="HAMAP" id="MF_01315">
    <property type="entry name" value="Ribosomal_uS13"/>
    <property type="match status" value="1"/>
</dbReference>
<dbReference type="InterPro" id="IPR027437">
    <property type="entry name" value="Rbsml_uS13_C"/>
</dbReference>
<dbReference type="InterPro" id="IPR001892">
    <property type="entry name" value="Ribosomal_uS13"/>
</dbReference>
<dbReference type="InterPro" id="IPR010979">
    <property type="entry name" value="Ribosomal_uS13-like_H2TH"/>
</dbReference>
<dbReference type="InterPro" id="IPR019980">
    <property type="entry name" value="Ribosomal_uS13_bac-type"/>
</dbReference>
<dbReference type="InterPro" id="IPR018269">
    <property type="entry name" value="Ribosomal_uS13_CS"/>
</dbReference>
<dbReference type="NCBIfam" id="TIGR03631">
    <property type="entry name" value="uS13_bact"/>
    <property type="match status" value="1"/>
</dbReference>
<dbReference type="PANTHER" id="PTHR10871">
    <property type="entry name" value="30S RIBOSOMAL PROTEIN S13/40S RIBOSOMAL PROTEIN S18"/>
    <property type="match status" value="1"/>
</dbReference>
<dbReference type="PANTHER" id="PTHR10871:SF1">
    <property type="entry name" value="SMALL RIBOSOMAL SUBUNIT PROTEIN US13M"/>
    <property type="match status" value="1"/>
</dbReference>
<dbReference type="Pfam" id="PF00416">
    <property type="entry name" value="Ribosomal_S13"/>
    <property type="match status" value="1"/>
</dbReference>
<dbReference type="PIRSF" id="PIRSF002134">
    <property type="entry name" value="Ribosomal_S13"/>
    <property type="match status" value="1"/>
</dbReference>
<dbReference type="SUPFAM" id="SSF46946">
    <property type="entry name" value="S13-like H2TH domain"/>
    <property type="match status" value="1"/>
</dbReference>
<dbReference type="PROSITE" id="PS00646">
    <property type="entry name" value="RIBOSOMAL_S13_1"/>
    <property type="match status" value="1"/>
</dbReference>
<dbReference type="PROSITE" id="PS50159">
    <property type="entry name" value="RIBOSOMAL_S13_2"/>
    <property type="match status" value="1"/>
</dbReference>
<accession>Q1C2W8</accession>
<keyword id="KW-0687">Ribonucleoprotein</keyword>
<keyword id="KW-0689">Ribosomal protein</keyword>
<keyword id="KW-0694">RNA-binding</keyword>
<keyword id="KW-0699">rRNA-binding</keyword>
<keyword id="KW-0820">tRNA-binding</keyword>
<proteinExistence type="inferred from homology"/>
<organism>
    <name type="scientific">Yersinia pestis bv. Antiqua (strain Antiqua)</name>
    <dbReference type="NCBI Taxonomy" id="360102"/>
    <lineage>
        <taxon>Bacteria</taxon>
        <taxon>Pseudomonadati</taxon>
        <taxon>Pseudomonadota</taxon>
        <taxon>Gammaproteobacteria</taxon>
        <taxon>Enterobacterales</taxon>
        <taxon>Yersiniaceae</taxon>
        <taxon>Yersinia</taxon>
    </lineage>
</organism>
<protein>
    <recommendedName>
        <fullName evidence="1">Small ribosomal subunit protein uS13</fullName>
    </recommendedName>
    <alternativeName>
        <fullName evidence="3">30S ribosomal protein S13</fullName>
    </alternativeName>
</protein>
<sequence>MARIAGINIPDQKHTVIALTAIFGIGKTRSQAICVAAGIAEHVKISELSEEQIEKLRDEVAKYVVEGDLRREVTLSIKRLMDLGTYRGLRHRRGLPVRGQRTKTNARTRKGPRKPIKK</sequence>
<gene>
    <name evidence="1" type="primary">rpsM</name>
    <name type="ordered locus">YPA_3242</name>
</gene>
<evidence type="ECO:0000255" key="1">
    <source>
        <dbReference type="HAMAP-Rule" id="MF_01315"/>
    </source>
</evidence>
<evidence type="ECO:0000256" key="2">
    <source>
        <dbReference type="SAM" id="MobiDB-lite"/>
    </source>
</evidence>
<evidence type="ECO:0000305" key="3"/>
<name>RS13_YERPA</name>
<feature type="chain" id="PRO_0000306746" description="Small ribosomal subunit protein uS13">
    <location>
        <begin position="1"/>
        <end position="118"/>
    </location>
</feature>
<feature type="region of interest" description="Disordered" evidence="2">
    <location>
        <begin position="92"/>
        <end position="118"/>
    </location>
</feature>
<comment type="function">
    <text evidence="1">Located at the top of the head of the 30S subunit, it contacts several helices of the 16S rRNA. In the 70S ribosome it contacts the 23S rRNA (bridge B1a) and protein L5 of the 50S subunit (bridge B1b), connecting the 2 subunits; these bridges are implicated in subunit movement. Contacts the tRNAs in the A and P-sites.</text>
</comment>
<comment type="subunit">
    <text evidence="1">Part of the 30S ribosomal subunit. Forms a loose heterodimer with protein S19. Forms two bridges to the 50S subunit in the 70S ribosome.</text>
</comment>
<comment type="similarity">
    <text evidence="1">Belongs to the universal ribosomal protein uS13 family.</text>
</comment>
<reference key="1">
    <citation type="journal article" date="2006" name="J. Bacteriol.">
        <title>Complete genome sequence of Yersinia pestis strains Antiqua and Nepal516: evidence of gene reduction in an emerging pathogen.</title>
        <authorList>
            <person name="Chain P.S.G."/>
            <person name="Hu P."/>
            <person name="Malfatti S.A."/>
            <person name="Radnedge L."/>
            <person name="Larimer F."/>
            <person name="Vergez L.M."/>
            <person name="Worsham P."/>
            <person name="Chu M.C."/>
            <person name="Andersen G.L."/>
        </authorList>
    </citation>
    <scope>NUCLEOTIDE SEQUENCE [LARGE SCALE GENOMIC DNA]</scope>
    <source>
        <strain>Antiqua</strain>
    </source>
</reference>